<name>NGN1_MOUSE</name>
<proteinExistence type="evidence at protein level"/>
<keyword id="KW-0010">Activator</keyword>
<keyword id="KW-0217">Developmental protein</keyword>
<keyword id="KW-0221">Differentiation</keyword>
<keyword id="KW-0238">DNA-binding</keyword>
<keyword id="KW-0524">Neurogenesis</keyword>
<keyword id="KW-0539">Nucleus</keyword>
<keyword id="KW-1185">Reference proteome</keyword>
<keyword id="KW-0804">Transcription</keyword>
<keyword id="KW-0805">Transcription regulation</keyword>
<accession>P70660</accession>
<organism>
    <name type="scientific">Mus musculus</name>
    <name type="common">Mouse</name>
    <dbReference type="NCBI Taxonomy" id="10090"/>
    <lineage>
        <taxon>Eukaryota</taxon>
        <taxon>Metazoa</taxon>
        <taxon>Chordata</taxon>
        <taxon>Craniata</taxon>
        <taxon>Vertebrata</taxon>
        <taxon>Euteleostomi</taxon>
        <taxon>Mammalia</taxon>
        <taxon>Eutheria</taxon>
        <taxon>Euarchontoglires</taxon>
        <taxon>Glires</taxon>
        <taxon>Rodentia</taxon>
        <taxon>Myomorpha</taxon>
        <taxon>Muroidea</taxon>
        <taxon>Muridae</taxon>
        <taxon>Murinae</taxon>
        <taxon>Mus</taxon>
        <taxon>Mus</taxon>
    </lineage>
</organism>
<reference key="1">
    <citation type="journal article" date="1996" name="Mol. Cell. Biol.">
        <title>NeuroD2 and neuroD3: distinct expression patterns and transcriptional activation potentials within the neuroD gene family.</title>
        <authorList>
            <person name="McCormick M.B."/>
            <person name="Tamimi R.M."/>
            <person name="Snider L."/>
            <person name="Asakura A."/>
            <person name="Bergstrom D."/>
            <person name="Tapscott S.J."/>
        </authorList>
    </citation>
    <scope>NUCLEOTIDE SEQUENCE [GENOMIC DNA]</scope>
    <scope>TISSUE SPECIFICITY</scope>
    <source>
        <strain>129/Sv</strain>
    </source>
</reference>
<reference key="2">
    <citation type="journal article" date="1996" name="Cell">
        <title>Identification of neurogenin, a vertebrate neuronal determination gene.</title>
        <authorList>
            <person name="Ma Q."/>
            <person name="Kintner C."/>
            <person name="Anderson D.J."/>
        </authorList>
    </citation>
    <scope>NUCLEOTIDE SEQUENCE [GENOMIC DNA]</scope>
    <source>
        <strain>129/Sv</strain>
    </source>
</reference>
<reference key="3">
    <citation type="journal article" date="1997" name="Development">
        <title>Mash1 activates a cascade of bHLH regulators in olfactory neuron progenitors.</title>
        <authorList>
            <person name="Cau E."/>
            <person name="Gradwohl G."/>
            <person name="Fode C."/>
            <person name="Guillemot F."/>
        </authorList>
    </citation>
    <scope>NUCLEOTIDE SEQUENCE [GENOMIC DNA]</scope>
    <source>
        <strain>129/Sv</strain>
    </source>
</reference>
<reference key="4">
    <citation type="journal article" date="2004" name="Genome Res.">
        <title>The status, quality, and expansion of the NIH full-length cDNA project: the Mammalian Gene Collection (MGC).</title>
        <authorList>
            <consortium name="The MGC Project Team"/>
        </authorList>
    </citation>
    <scope>NUCLEOTIDE SEQUENCE [LARGE SCALE MRNA]</scope>
    <source>
        <tissue>Bone</tissue>
    </source>
</reference>
<reference key="5">
    <citation type="journal article" date="2000" name="Development">
        <title>Generation of neurons by transient expression of neural bHLH proteins in mammalian cells.</title>
        <authorList>
            <person name="Farah M.H."/>
            <person name="Olson J.M."/>
            <person name="Sucic H.B."/>
            <person name="Hume R.I."/>
            <person name="Tapscott S.J."/>
            <person name="Turner D.L."/>
        </authorList>
    </citation>
    <scope>FUNCTION</scope>
    <scope>DNA-BINDING</scope>
</reference>
<reference key="6">
    <citation type="journal article" date="2004" name="Dev. Biol.">
        <title>Regulation of neuroD2 expression in mouse brain.</title>
        <authorList>
            <person name="Lin C.H."/>
            <person name="Stoeck J."/>
            <person name="Ravanpay A.C."/>
            <person name="Guillemot F."/>
            <person name="Tapscott S.J."/>
            <person name="Olson J.M."/>
        </authorList>
    </citation>
    <scope>FUNCTION</scope>
    <scope>DNA-BINDING</scope>
</reference>
<reference key="7">
    <citation type="journal article" date="2007" name="EMBO J.">
        <title>Neurogenin and NeuroD direct transcriptional targets and their regulatory enhancers.</title>
        <authorList>
            <person name="Seo S."/>
            <person name="Lim J.W."/>
            <person name="Yellajoshyula D."/>
            <person name="Chang L.W."/>
            <person name="Kroll K.L."/>
        </authorList>
    </citation>
    <scope>FUNCTION</scope>
    <scope>ASSOCIATION WITH CHROMATIN</scope>
</reference>
<protein>
    <recommendedName>
        <fullName>Neurogenin-1</fullName>
        <shortName>NGN-1</shortName>
    </recommendedName>
    <alternativeName>
        <fullName>Helix-loop-helix protein mATH-4C</fullName>
        <shortName>mATH4C</shortName>
    </alternativeName>
    <alternativeName>
        <fullName>Neurogenic basic-helix-loop-helix protein</fullName>
    </alternativeName>
    <alternativeName>
        <fullName>Neurogenic differentiation factor 3</fullName>
        <shortName>NeuroD3</shortName>
    </alternativeName>
</protein>
<gene>
    <name type="primary">Neurog1</name>
    <name type="synonym">Ath4c</name>
    <name type="synonym">Neurod3</name>
    <name type="synonym">Ngn</name>
    <name type="synonym">Ngn1</name>
</gene>
<feature type="chain" id="PRO_0000127397" description="Neurogenin-1">
    <location>
        <begin position="1"/>
        <end position="244"/>
    </location>
</feature>
<feature type="domain" description="bHLH" evidence="1">
    <location>
        <begin position="93"/>
        <end position="145"/>
    </location>
</feature>
<feature type="region of interest" description="Disordered" evidence="2">
    <location>
        <begin position="1"/>
        <end position="27"/>
    </location>
</feature>
<feature type="region of interest" description="Disordered" evidence="2">
    <location>
        <begin position="39"/>
        <end position="82"/>
    </location>
</feature>
<feature type="compositionally biased region" description="Low complexity" evidence="2">
    <location>
        <begin position="10"/>
        <end position="27"/>
    </location>
</feature>
<dbReference type="EMBL" id="U63841">
    <property type="protein sequence ID" value="AAB37576.1"/>
    <property type="molecule type" value="Genomic_DNA"/>
</dbReference>
<dbReference type="EMBL" id="U67776">
    <property type="protein sequence ID" value="AAC52856.1"/>
    <property type="molecule type" value="Genomic_DNA"/>
</dbReference>
<dbReference type="EMBL" id="Y09166">
    <property type="protein sequence ID" value="CAA70365.1"/>
    <property type="molecule type" value="Genomic_DNA"/>
</dbReference>
<dbReference type="EMBL" id="BC062148">
    <property type="protein sequence ID" value="AAH62148.1"/>
    <property type="molecule type" value="mRNA"/>
</dbReference>
<dbReference type="CCDS" id="CCDS26559.1"/>
<dbReference type="RefSeq" id="NP_035026.1">
    <property type="nucleotide sequence ID" value="NM_010896.3"/>
</dbReference>
<dbReference type="SMR" id="P70660"/>
<dbReference type="BioGRID" id="201735">
    <property type="interactions" value="4"/>
</dbReference>
<dbReference type="FunCoup" id="P70660">
    <property type="interactions" value="143"/>
</dbReference>
<dbReference type="IntAct" id="P70660">
    <property type="interactions" value="1"/>
</dbReference>
<dbReference type="STRING" id="10090.ENSMUSP00000050484"/>
<dbReference type="iPTMnet" id="P70660"/>
<dbReference type="PhosphoSitePlus" id="P70660"/>
<dbReference type="jPOST" id="P70660"/>
<dbReference type="PaxDb" id="10090-ENSMUSP00000050484"/>
<dbReference type="Antibodypedia" id="26408">
    <property type="antibodies" value="615 antibodies from 35 providers"/>
</dbReference>
<dbReference type="DNASU" id="18014"/>
<dbReference type="Ensembl" id="ENSMUST00000058475.6">
    <property type="protein sequence ID" value="ENSMUSP00000050484.5"/>
    <property type="gene ID" value="ENSMUSG00000048904.6"/>
</dbReference>
<dbReference type="GeneID" id="18014"/>
<dbReference type="KEGG" id="mmu:18014"/>
<dbReference type="UCSC" id="uc007qsl.2">
    <property type="organism name" value="mouse"/>
</dbReference>
<dbReference type="AGR" id="MGI:107754"/>
<dbReference type="CTD" id="4762"/>
<dbReference type="MGI" id="MGI:107754">
    <property type="gene designation" value="Neurog1"/>
</dbReference>
<dbReference type="VEuPathDB" id="HostDB:ENSMUSG00000048904"/>
<dbReference type="eggNOG" id="KOG3898">
    <property type="taxonomic scope" value="Eukaryota"/>
</dbReference>
<dbReference type="GeneTree" id="ENSGT00940000162170"/>
<dbReference type="HOGENOM" id="CLU_097959_0_0_1"/>
<dbReference type="InParanoid" id="P70660"/>
<dbReference type="OMA" id="EDYCYGP"/>
<dbReference type="OrthoDB" id="5969565at2759"/>
<dbReference type="PhylomeDB" id="P70660"/>
<dbReference type="TreeFam" id="TF315153"/>
<dbReference type="BioGRID-ORCS" id="18014">
    <property type="hits" value="3 hits in 78 CRISPR screens"/>
</dbReference>
<dbReference type="PRO" id="PR:P70660"/>
<dbReference type="Proteomes" id="UP000000589">
    <property type="component" value="Chromosome 13"/>
</dbReference>
<dbReference type="RNAct" id="P70660">
    <property type="molecule type" value="protein"/>
</dbReference>
<dbReference type="Bgee" id="ENSMUSG00000048904">
    <property type="expression patterns" value="Expressed in cerebral cortex ventricular layer and 92 other cell types or tissues"/>
</dbReference>
<dbReference type="GO" id="GO:0043025">
    <property type="term" value="C:neuronal cell body"/>
    <property type="evidence" value="ECO:0000314"/>
    <property type="project" value="MGI"/>
</dbReference>
<dbReference type="GO" id="GO:0005634">
    <property type="term" value="C:nucleus"/>
    <property type="evidence" value="ECO:0007669"/>
    <property type="project" value="UniProtKB-SubCell"/>
</dbReference>
<dbReference type="GO" id="GO:0043204">
    <property type="term" value="C:perikaryon"/>
    <property type="evidence" value="ECO:0000314"/>
    <property type="project" value="MGI"/>
</dbReference>
<dbReference type="GO" id="GO:0003682">
    <property type="term" value="F:chromatin binding"/>
    <property type="evidence" value="ECO:0000314"/>
    <property type="project" value="UniProtKB"/>
</dbReference>
<dbReference type="GO" id="GO:0070888">
    <property type="term" value="F:E-box binding"/>
    <property type="evidence" value="ECO:0000314"/>
    <property type="project" value="UniProtKB"/>
</dbReference>
<dbReference type="GO" id="GO:0042803">
    <property type="term" value="F:protein homodimerization activity"/>
    <property type="evidence" value="ECO:0007669"/>
    <property type="project" value="Ensembl"/>
</dbReference>
<dbReference type="GO" id="GO:0031223">
    <property type="term" value="P:auditory behavior"/>
    <property type="evidence" value="ECO:0007669"/>
    <property type="project" value="Ensembl"/>
</dbReference>
<dbReference type="GO" id="GO:0045165">
    <property type="term" value="P:cell fate commitment"/>
    <property type="evidence" value="ECO:0000316"/>
    <property type="project" value="MGI"/>
</dbReference>
<dbReference type="GO" id="GO:0090103">
    <property type="term" value="P:cochlea morphogenesis"/>
    <property type="evidence" value="ECO:0007669"/>
    <property type="project" value="Ensembl"/>
</dbReference>
<dbReference type="GO" id="GO:0097094">
    <property type="term" value="P:craniofacial suture morphogenesis"/>
    <property type="evidence" value="ECO:0007669"/>
    <property type="project" value="Ensembl"/>
</dbReference>
<dbReference type="GO" id="GO:0010458">
    <property type="term" value="P:exit from mitosis"/>
    <property type="evidence" value="ECO:0000315"/>
    <property type="project" value="MGI"/>
</dbReference>
<dbReference type="GO" id="GO:0035112">
    <property type="term" value="P:genitalia morphogenesis"/>
    <property type="evidence" value="ECO:0007669"/>
    <property type="project" value="Ensembl"/>
</dbReference>
<dbReference type="GO" id="GO:1905748">
    <property type="term" value="P:hard palate morphogenesis"/>
    <property type="evidence" value="ECO:0007669"/>
    <property type="project" value="Ensembl"/>
</dbReference>
<dbReference type="GO" id="GO:0042472">
    <property type="term" value="P:inner ear morphogenesis"/>
    <property type="evidence" value="ECO:0000315"/>
    <property type="project" value="MGI"/>
</dbReference>
<dbReference type="GO" id="GO:0098583">
    <property type="term" value="P:learned vocalization behavior"/>
    <property type="evidence" value="ECO:0007669"/>
    <property type="project" value="Ensembl"/>
</dbReference>
<dbReference type="GO" id="GO:0071626">
    <property type="term" value="P:mastication"/>
    <property type="evidence" value="ECO:0007669"/>
    <property type="project" value="Ensembl"/>
</dbReference>
<dbReference type="GO" id="GO:1901078">
    <property type="term" value="P:negative regulation of relaxation of muscle"/>
    <property type="evidence" value="ECO:0007669"/>
    <property type="project" value="Ensembl"/>
</dbReference>
<dbReference type="GO" id="GO:1905747">
    <property type="term" value="P:negative regulation of saliva secretion"/>
    <property type="evidence" value="ECO:0007669"/>
    <property type="project" value="Ensembl"/>
</dbReference>
<dbReference type="GO" id="GO:0022008">
    <property type="term" value="P:neurogenesis"/>
    <property type="evidence" value="ECO:0000314"/>
    <property type="project" value="MGI"/>
</dbReference>
<dbReference type="GO" id="GO:0050885">
    <property type="term" value="P:neuromuscular process controlling balance"/>
    <property type="evidence" value="ECO:0007669"/>
    <property type="project" value="Ensembl"/>
</dbReference>
<dbReference type="GO" id="GO:0030182">
    <property type="term" value="P:neuron differentiation"/>
    <property type="evidence" value="ECO:0000314"/>
    <property type="project" value="MGI"/>
</dbReference>
<dbReference type="GO" id="GO:0030432">
    <property type="term" value="P:peristalsis"/>
    <property type="evidence" value="ECO:0007669"/>
    <property type="project" value="Ensembl"/>
</dbReference>
<dbReference type="GO" id="GO:0051091">
    <property type="term" value="P:positive regulation of DNA-binding transcription factor activity"/>
    <property type="evidence" value="ECO:0000314"/>
    <property type="project" value="UniProtKB"/>
</dbReference>
<dbReference type="GO" id="GO:0031536">
    <property type="term" value="P:positive regulation of exit from mitosis"/>
    <property type="evidence" value="ECO:0000315"/>
    <property type="project" value="MGI"/>
</dbReference>
<dbReference type="GO" id="GO:0045666">
    <property type="term" value="P:positive regulation of neuron differentiation"/>
    <property type="evidence" value="ECO:0000314"/>
    <property type="project" value="UniProtKB"/>
</dbReference>
<dbReference type="GO" id="GO:0045944">
    <property type="term" value="P:positive regulation of transcription by RNA polymerase II"/>
    <property type="evidence" value="ECO:0000314"/>
    <property type="project" value="UniProtKB"/>
</dbReference>
<dbReference type="GO" id="GO:0048634">
    <property type="term" value="P:regulation of muscle organ development"/>
    <property type="evidence" value="ECO:0007669"/>
    <property type="project" value="Ensembl"/>
</dbReference>
<dbReference type="GO" id="GO:0045664">
    <property type="term" value="P:regulation of neuron differentiation"/>
    <property type="evidence" value="ECO:0000316"/>
    <property type="project" value="MGI"/>
</dbReference>
<dbReference type="GO" id="GO:0007356">
    <property type="term" value="P:thorax and anterior abdomen determination"/>
    <property type="evidence" value="ECO:0007669"/>
    <property type="project" value="Ensembl"/>
</dbReference>
<dbReference type="GO" id="GO:0021559">
    <property type="term" value="P:trigeminal nerve development"/>
    <property type="evidence" value="ECO:0007669"/>
    <property type="project" value="Ensembl"/>
</dbReference>
<dbReference type="GO" id="GO:0021650">
    <property type="term" value="P:vestibulocochlear nerve formation"/>
    <property type="evidence" value="ECO:0007669"/>
    <property type="project" value="Ensembl"/>
</dbReference>
<dbReference type="CDD" id="cd19716">
    <property type="entry name" value="bHLH_TS_NGN1_NeuroD3"/>
    <property type="match status" value="1"/>
</dbReference>
<dbReference type="FunFam" id="4.10.280.10:FF:000006">
    <property type="entry name" value="Neurogenic differentiation factor"/>
    <property type="match status" value="1"/>
</dbReference>
<dbReference type="Gene3D" id="4.10.280.10">
    <property type="entry name" value="Helix-loop-helix DNA-binding domain"/>
    <property type="match status" value="1"/>
</dbReference>
<dbReference type="InterPro" id="IPR011598">
    <property type="entry name" value="bHLH_dom"/>
</dbReference>
<dbReference type="InterPro" id="IPR050359">
    <property type="entry name" value="bHLH_transcription_factors"/>
</dbReference>
<dbReference type="InterPro" id="IPR036638">
    <property type="entry name" value="HLH_DNA-bd_sf"/>
</dbReference>
<dbReference type="PANTHER" id="PTHR19290">
    <property type="entry name" value="BASIC HELIX-LOOP-HELIX PROTEIN NEUROGENIN-RELATED"/>
    <property type="match status" value="1"/>
</dbReference>
<dbReference type="PANTHER" id="PTHR19290:SF130">
    <property type="entry name" value="NEUROGENIN-1"/>
    <property type="match status" value="1"/>
</dbReference>
<dbReference type="Pfam" id="PF00010">
    <property type="entry name" value="HLH"/>
    <property type="match status" value="1"/>
</dbReference>
<dbReference type="SMART" id="SM00353">
    <property type="entry name" value="HLH"/>
    <property type="match status" value="1"/>
</dbReference>
<dbReference type="SUPFAM" id="SSF47459">
    <property type="entry name" value="HLH, helix-loop-helix DNA-binding domain"/>
    <property type="match status" value="1"/>
</dbReference>
<dbReference type="PROSITE" id="PS50888">
    <property type="entry name" value="BHLH"/>
    <property type="match status" value="1"/>
</dbReference>
<evidence type="ECO:0000255" key="1">
    <source>
        <dbReference type="PROSITE-ProRule" id="PRU00981"/>
    </source>
</evidence>
<evidence type="ECO:0000256" key="2">
    <source>
        <dbReference type="SAM" id="MobiDB-lite"/>
    </source>
</evidence>
<evidence type="ECO:0000269" key="3">
    <source>
    </source>
</evidence>
<evidence type="ECO:0000269" key="4">
    <source>
    </source>
</evidence>
<evidence type="ECO:0000269" key="5">
    <source>
    </source>
</evidence>
<evidence type="ECO:0000269" key="6">
    <source>
    </source>
</evidence>
<evidence type="ECO:0000305" key="7"/>
<comment type="function">
    <text evidence="3 4 5">Acts as a transcriptional regulator. Involved in the initiation of neuronal differentiation. Activates transcription by binding to the E box (5'-CANNTG-3'). Associates with chromatin to enhancer regulatory elements in genes encoding key transcriptional regulators of neurogenesis.</text>
</comment>
<comment type="subunit">
    <text>Efficient DNA binding requires dimerization with another bHLH protein.</text>
</comment>
<comment type="subcellular location">
    <subcellularLocation>
        <location evidence="7">Nucleus</location>
    </subcellularLocation>
</comment>
<comment type="tissue specificity">
    <text>Expression restricted to the embryonic nervous system.</text>
</comment>
<comment type="developmental stage">
    <text evidence="6">Highest expression in the embryo between days 10 and 12. Declines to undetectable levels by embryonic day 16.</text>
</comment>
<sequence length="244" mass="26300">MPAPLETCISDLDCSSSNSSSDLSSFLTDEEDCARLQPLASTSGLSVPARRSAPALSGASNVPGAQDEEQERRRRRGRARVRSEALLHSLRRSRRVKANDRERNRMHNLNAALDALRSVLPSFPDDTKLTKIETLRFAYNYIWALAETLRLADQGLPGGSARERLLPPQCVPCLPGPPSPASDTESWGSGAAASPCATVASPLSDPSSPSASEDFTYGPGDPLFSFPGLPKDLLHTTPCFIPYH</sequence>